<dbReference type="EMBL" id="CH954178">
    <property type="protein sequence ID" value="EDV52163.1"/>
    <property type="molecule type" value="Genomic_DNA"/>
</dbReference>
<dbReference type="SMR" id="B3NDN0"/>
<dbReference type="EnsemblMetazoa" id="FBtr0407346">
    <property type="protein sequence ID" value="FBpp0365893"/>
    <property type="gene ID" value="FBgn0108166"/>
</dbReference>
<dbReference type="EnsemblMetazoa" id="XM_015158554.2">
    <property type="protein sequence ID" value="XP_015014040.1"/>
    <property type="gene ID" value="LOC6544298"/>
</dbReference>
<dbReference type="GeneID" id="6544298"/>
<dbReference type="KEGG" id="der:6544298"/>
<dbReference type="CTD" id="53556"/>
<dbReference type="eggNOG" id="KOG4441">
    <property type="taxonomic scope" value="Eukaryota"/>
</dbReference>
<dbReference type="HOGENOM" id="CLU_004253_14_2_1"/>
<dbReference type="OMA" id="CAVFNNL"/>
<dbReference type="OrthoDB" id="45365at2759"/>
<dbReference type="PhylomeDB" id="B3NDN0"/>
<dbReference type="UniPathway" id="UPA00143"/>
<dbReference type="Proteomes" id="UP000008711">
    <property type="component" value="Unassembled WGS sequence"/>
</dbReference>
<dbReference type="GO" id="GO:0031463">
    <property type="term" value="C:Cul3-RING ubiquitin ligase complex"/>
    <property type="evidence" value="ECO:0007669"/>
    <property type="project" value="EnsemblMetazoa"/>
</dbReference>
<dbReference type="GO" id="GO:0003779">
    <property type="term" value="F:actin binding"/>
    <property type="evidence" value="ECO:0007669"/>
    <property type="project" value="UniProtKB-KW"/>
</dbReference>
<dbReference type="GO" id="GO:1990756">
    <property type="term" value="F:ubiquitin-like ligase-substrate adaptor activity"/>
    <property type="evidence" value="ECO:0007669"/>
    <property type="project" value="EnsemblMetazoa"/>
</dbReference>
<dbReference type="GO" id="GO:0045886">
    <property type="term" value="P:negative regulation of synaptic assembly at neuromuscular junction"/>
    <property type="evidence" value="ECO:0000250"/>
    <property type="project" value="UniProtKB"/>
</dbReference>
<dbReference type="GO" id="GO:0043161">
    <property type="term" value="P:proteasome-mediated ubiquitin-dependent protein catabolic process"/>
    <property type="evidence" value="ECO:0007669"/>
    <property type="project" value="EnsemblMetazoa"/>
</dbReference>
<dbReference type="GO" id="GO:0016567">
    <property type="term" value="P:protein ubiquitination"/>
    <property type="evidence" value="ECO:0007669"/>
    <property type="project" value="UniProtKB-UniPathway"/>
</dbReference>
<dbReference type="CDD" id="cd18459">
    <property type="entry name" value="BACK_KLHL20"/>
    <property type="match status" value="1"/>
</dbReference>
<dbReference type="CDD" id="cd18249">
    <property type="entry name" value="BTB_POZ_KLHL20_KLEIP"/>
    <property type="match status" value="1"/>
</dbReference>
<dbReference type="FunFam" id="1.25.40.420:FF:000001">
    <property type="entry name" value="Kelch-like family member 12"/>
    <property type="match status" value="1"/>
</dbReference>
<dbReference type="FunFam" id="2.120.10.80:FF:000006">
    <property type="entry name" value="Kelch-like family member 20"/>
    <property type="match status" value="1"/>
</dbReference>
<dbReference type="FunFam" id="3.30.710.10:FF:000001">
    <property type="entry name" value="Kelch-like family member 20"/>
    <property type="match status" value="1"/>
</dbReference>
<dbReference type="Gene3D" id="1.25.40.420">
    <property type="match status" value="1"/>
</dbReference>
<dbReference type="Gene3D" id="2.120.10.80">
    <property type="entry name" value="Kelch-type beta propeller"/>
    <property type="match status" value="1"/>
</dbReference>
<dbReference type="Gene3D" id="3.30.710.10">
    <property type="entry name" value="Potassium Channel Kv1.1, Chain A"/>
    <property type="match status" value="1"/>
</dbReference>
<dbReference type="InterPro" id="IPR011705">
    <property type="entry name" value="BACK"/>
</dbReference>
<dbReference type="InterPro" id="IPR017096">
    <property type="entry name" value="BTB-kelch_protein"/>
</dbReference>
<dbReference type="InterPro" id="IPR000210">
    <property type="entry name" value="BTB/POZ_dom"/>
</dbReference>
<dbReference type="InterPro" id="IPR011043">
    <property type="entry name" value="Gal_Oxase/kelch_b-propeller"/>
</dbReference>
<dbReference type="InterPro" id="IPR015915">
    <property type="entry name" value="Kelch-typ_b-propeller"/>
</dbReference>
<dbReference type="InterPro" id="IPR006652">
    <property type="entry name" value="Kelch_1"/>
</dbReference>
<dbReference type="InterPro" id="IPR011333">
    <property type="entry name" value="SKP1/BTB/POZ_sf"/>
</dbReference>
<dbReference type="PANTHER" id="PTHR24412">
    <property type="entry name" value="KELCH PROTEIN"/>
    <property type="match status" value="1"/>
</dbReference>
<dbReference type="PANTHER" id="PTHR24412:SF451">
    <property type="entry name" value="KELCH-LIKE PROTEIN 20"/>
    <property type="match status" value="1"/>
</dbReference>
<dbReference type="Pfam" id="PF07707">
    <property type="entry name" value="BACK"/>
    <property type="match status" value="1"/>
</dbReference>
<dbReference type="Pfam" id="PF00651">
    <property type="entry name" value="BTB"/>
    <property type="match status" value="1"/>
</dbReference>
<dbReference type="Pfam" id="PF01344">
    <property type="entry name" value="Kelch_1"/>
    <property type="match status" value="1"/>
</dbReference>
<dbReference type="Pfam" id="PF24681">
    <property type="entry name" value="Kelch_KLHDC2_KLHL20_DRC7"/>
    <property type="match status" value="1"/>
</dbReference>
<dbReference type="PIRSF" id="PIRSF037037">
    <property type="entry name" value="Kelch-like_protein_gigaxonin"/>
    <property type="match status" value="1"/>
</dbReference>
<dbReference type="SMART" id="SM00875">
    <property type="entry name" value="BACK"/>
    <property type="match status" value="1"/>
</dbReference>
<dbReference type="SMART" id="SM00225">
    <property type="entry name" value="BTB"/>
    <property type="match status" value="1"/>
</dbReference>
<dbReference type="SMART" id="SM00612">
    <property type="entry name" value="Kelch"/>
    <property type="match status" value="6"/>
</dbReference>
<dbReference type="SUPFAM" id="SSF50965">
    <property type="entry name" value="Galactose oxidase, central domain"/>
    <property type="match status" value="1"/>
</dbReference>
<dbReference type="SUPFAM" id="SSF117281">
    <property type="entry name" value="Kelch motif"/>
    <property type="match status" value="1"/>
</dbReference>
<dbReference type="SUPFAM" id="SSF54695">
    <property type="entry name" value="POZ domain"/>
    <property type="match status" value="1"/>
</dbReference>
<dbReference type="PROSITE" id="PS50097">
    <property type="entry name" value="BTB"/>
    <property type="match status" value="1"/>
</dbReference>
<evidence type="ECO:0000250" key="1"/>
<evidence type="ECO:0000250" key="2">
    <source>
        <dbReference type="UniProtKB" id="Q9VUU5"/>
    </source>
</evidence>
<evidence type="ECO:0000250" key="3">
    <source>
        <dbReference type="UniProtKB" id="Q9Y2M5"/>
    </source>
</evidence>
<evidence type="ECO:0000255" key="4"/>
<evidence type="ECO:0000255" key="5">
    <source>
        <dbReference type="PROSITE-ProRule" id="PRU00037"/>
    </source>
</evidence>
<evidence type="ECO:0000256" key="6">
    <source>
        <dbReference type="SAM" id="MobiDB-lite"/>
    </source>
</evidence>
<evidence type="ECO:0000312" key="7">
    <source>
        <dbReference type="EMBL" id="EDV52163.1"/>
    </source>
</evidence>
<protein>
    <recommendedName>
        <fullName evidence="2">Kelch-like protein diablo</fullName>
    </recommendedName>
</protein>
<organism>
    <name type="scientific">Drosophila erecta</name>
    <name type="common">Fruit fly</name>
    <dbReference type="NCBI Taxonomy" id="7220"/>
    <lineage>
        <taxon>Eukaryota</taxon>
        <taxon>Metazoa</taxon>
        <taxon>Ecdysozoa</taxon>
        <taxon>Arthropoda</taxon>
        <taxon>Hexapoda</taxon>
        <taxon>Insecta</taxon>
        <taxon>Pterygota</taxon>
        <taxon>Neoptera</taxon>
        <taxon>Endopterygota</taxon>
        <taxon>Diptera</taxon>
        <taxon>Brachycera</taxon>
        <taxon>Muscomorpha</taxon>
        <taxon>Ephydroidea</taxon>
        <taxon>Drosophilidae</taxon>
        <taxon>Drosophila</taxon>
        <taxon>Sophophora</taxon>
    </lineage>
</organism>
<comment type="function">
    <text evidence="2 3">Probable substrate-specific adapter of an E3 ubiquitin-protein ligase complex which mediates the ubiquitination and subsequent proteasomal degradation of target proteins. May have a role in synapse differentiation and growth (By similarity).</text>
</comment>
<comment type="pathway">
    <text evidence="3">Protein modification; protein ubiquitination.</text>
</comment>
<reference evidence="7" key="1">
    <citation type="journal article" date="2007" name="Nature">
        <title>Evolution of genes and genomes on the Drosophila phylogeny.</title>
        <authorList>
            <consortium name="Drosophila 12 genomes consortium"/>
        </authorList>
    </citation>
    <scope>NUCLEOTIDE SEQUENCE [LARGE SCALE GENOMIC DNA]</scope>
    <source>
        <strain evidence="7">Tucson 14021-0224.01</strain>
    </source>
</reference>
<keyword id="KW-0009">Actin-binding</keyword>
<keyword id="KW-0880">Kelch repeat</keyword>
<keyword id="KW-0597">Phosphoprotein</keyword>
<keyword id="KW-0677">Repeat</keyword>
<keyword id="KW-0833">Ubl conjugation pathway</keyword>
<feature type="chain" id="PRO_0000379946" description="Kelch-like protein diablo">
    <location>
        <begin position="1"/>
        <end position="623"/>
    </location>
</feature>
<feature type="domain" description="BTB" evidence="5">
    <location>
        <begin position="72"/>
        <end position="139"/>
    </location>
</feature>
<feature type="domain" description="BACK" evidence="4">
    <location>
        <begin position="174"/>
        <end position="276"/>
    </location>
</feature>
<feature type="repeat" description="Kelch 1" evidence="4">
    <location>
        <begin position="323"/>
        <end position="369"/>
    </location>
</feature>
<feature type="repeat" description="Kelch 2" evidence="4">
    <location>
        <begin position="371"/>
        <end position="417"/>
    </location>
</feature>
<feature type="repeat" description="Kelch 3" evidence="4">
    <location>
        <begin position="418"/>
        <end position="464"/>
    </location>
</feature>
<feature type="repeat" description="Kelch 4" evidence="4">
    <location>
        <begin position="466"/>
        <end position="511"/>
    </location>
</feature>
<feature type="repeat" description="Kelch 5" evidence="4">
    <location>
        <begin position="513"/>
        <end position="558"/>
    </location>
</feature>
<feature type="repeat" description="Kelch 6" evidence="4">
    <location>
        <begin position="559"/>
        <end position="605"/>
    </location>
</feature>
<feature type="region of interest" description="Disordered" evidence="6">
    <location>
        <begin position="1"/>
        <end position="54"/>
    </location>
</feature>
<feature type="compositionally biased region" description="Gly residues" evidence="6">
    <location>
        <begin position="20"/>
        <end position="32"/>
    </location>
</feature>
<feature type="modified residue" description="Phosphothreonine" evidence="1">
    <location>
        <position position="19"/>
    </location>
</feature>
<gene>
    <name evidence="2" type="primary">dbo</name>
    <name type="ORF">GG15931</name>
</gene>
<sequence length="623" mass="68941">MGDLPGSGSTAQPRDAAVTGTGGNSTAGGGSSVGSTAVDRPPSPARLSHTSEKHPKVTLTELNMLRRHRELCDVVLNVGGRKIFAHRVILSACSSYFCAMFTGELEESRQTEVTIRDIDENAMELLIDFCYTAHIMVEESNVQTLLPAACLLQLVEIQDICCEFLKRQLDPTNCLGIRAFADTHSCRELLRIADKFTQHNFQEVMESEEFLLLPVGQLVDIICSDELNVRSEEQVFNAVMSWLKYNVAERRQHLAQVLQHVRLPLLSPKFLVGTVGSDLLVRSDEACRDLVDEAKNYLLLPQERPLMQGPRTRPRKPTRRGEVLFAVGGWCSGDAIASVERFDPQTNDWKMVAPMSKRRCGVGVAVLNDLLYAVGGHDGQSYLNSIERYDPQTNQWSCDVAPTTSCRTSVGVAVLDGFLYAVGGQDGVQCLNHVERYDPKENKWSKVAPMTTRRLGVAVAVLGGFLYAIGGSDGQCPLNTVERYDPRHNKWVAVSPMSTRRKHLGCAVFNNYIYAVGGRDDCMELSSAERYNPLTNTWSPIVAMTSRRSGVGLAVVNGQLYAVGGFDGSAYLKTIEVYDPETNQWRLCGCMNYRRLGGGVGVMRAPQTENYMWCENSFKQPNS</sequence>
<name>KLHDB_DROER</name>
<accession>B3NDN0</accession>
<proteinExistence type="inferred from homology"/>